<evidence type="ECO:0000250" key="1"/>
<evidence type="ECO:0000250" key="2">
    <source>
        <dbReference type="UniProtKB" id="P43884"/>
    </source>
</evidence>
<evidence type="ECO:0000250" key="3">
    <source>
        <dbReference type="UniProtKB" id="Q8CGN5"/>
    </source>
</evidence>
<evidence type="ECO:0000256" key="4">
    <source>
        <dbReference type="SAM" id="MobiDB-lite"/>
    </source>
</evidence>
<evidence type="ECO:0000269" key="5">
    <source>
    </source>
</evidence>
<evidence type="ECO:0000269" key="6">
    <source>
    </source>
</evidence>
<evidence type="ECO:0000269" key="7">
    <source>
    </source>
</evidence>
<evidence type="ECO:0000269" key="8">
    <source>
    </source>
</evidence>
<evidence type="ECO:0000269" key="9">
    <source>
    </source>
</evidence>
<evidence type="ECO:0000305" key="10"/>
<evidence type="ECO:0000305" key="11">
    <source>
    </source>
</evidence>
<evidence type="ECO:0007744" key="12">
    <source>
    </source>
</evidence>
<proteinExistence type="evidence at protein level"/>
<comment type="function">
    <text evidence="7">Modulator of adipocyte lipid metabolism. Coats lipid storage droplets to protect them from breakdown by hormone-sensitive lipase (HSL). Its absence may result in leanness. Plays a role in unilocular lipid droplet formation by activating CIDEC. Their interaction promotes lipid droplet enlargement and directional net neutral lipid transfer. May modulate lipolysis and triglyceride levels.</text>
</comment>
<comment type="subunit">
    <text evidence="3 7 8">Interacts with ABHD5 (By similarity). Interacts with CIDEC (PubMed:23399566). Interacts with AQP7 (PubMed:27832861).</text>
</comment>
<comment type="interaction">
    <interactant intactId="EBI-26906001">
        <id>O60240</id>
    </interactant>
    <interactant intactId="EBI-20765950">
        <id>O14520</id>
        <label>AQP7</label>
    </interactant>
    <organismsDiffer>false</organismsDiffer>
    <experiments>4</experiments>
</comment>
<comment type="subcellular location">
    <subcellularLocation>
        <location evidence="7">Endoplasmic reticulum</location>
    </subcellularLocation>
    <subcellularLocation>
        <location evidence="7 11">Lipid droplet</location>
    </subcellularLocation>
    <text evidence="7">Lipid droplet surface-associated.</text>
</comment>
<comment type="tissue specificity">
    <text evidence="8 9">Detected in adipocytes from white adipose tissue (at protein level) (PubMed:27832861). Detected in visceral adipose tissue and mammary gland (PubMed:9521880).</text>
</comment>
<comment type="PTM">
    <text evidence="1">Major cAMP-dependent protein kinase-substrate in adipocytes, also dephosphorylated by PP1. When phosphorylated, may be maximally sensitive to HSL and when unphosphorylated, may play a role in the inhibition of lipolysis, by acting as a barrier in lipid droplet (By similarity).</text>
</comment>
<comment type="disease" evidence="6">
    <disease id="DI-03072">
        <name>Lipodystrophy, familial partial, 4</name>
        <acronym>FPLD4</acronym>
        <description>A form of lipodystrophy characterized by loss of subcutaneous adipose tissue primarily affecting the lower limbs, insulin-resistant diabetes mellitus, hypertriglyceridemia, and hypertension.</description>
        <dbReference type="MIM" id="613877"/>
    </disease>
    <text>The disease is caused by variants affecting the gene represented in this entry.</text>
</comment>
<comment type="similarity">
    <text evidence="10">Belongs to the perilipin family.</text>
</comment>
<comment type="online information" name="Protein Spotlight">
    <link uri="https://www.proteinspotlight.org/back_issues/010"/>
    <text>Fat, wonderful fat - Issue 10 of May 2001</text>
</comment>
<dbReference type="EMBL" id="AB005293">
    <property type="protein sequence ID" value="BAA25420.1"/>
    <property type="molecule type" value="mRNA"/>
</dbReference>
<dbReference type="EMBL" id="AC013787">
    <property type="status" value="NOT_ANNOTATED_CDS"/>
    <property type="molecule type" value="Genomic_DNA"/>
</dbReference>
<dbReference type="EMBL" id="BC031084">
    <property type="protein sequence ID" value="AAH31084.1"/>
    <property type="molecule type" value="mRNA"/>
</dbReference>
<dbReference type="CCDS" id="CCDS10353.1"/>
<dbReference type="RefSeq" id="NP_001138783.1">
    <property type="nucleotide sequence ID" value="NM_001145311.2"/>
</dbReference>
<dbReference type="RefSeq" id="NP_002657.3">
    <property type="nucleotide sequence ID" value="NM_002666.5"/>
</dbReference>
<dbReference type="RefSeq" id="XP_005254991.1">
    <property type="nucleotide sequence ID" value="XM_005254934.4"/>
</dbReference>
<dbReference type="BioGRID" id="111361">
    <property type="interactions" value="12"/>
</dbReference>
<dbReference type="FunCoup" id="O60240">
    <property type="interactions" value="223"/>
</dbReference>
<dbReference type="IntAct" id="O60240">
    <property type="interactions" value="1"/>
</dbReference>
<dbReference type="STRING" id="9606.ENSP00000300055"/>
<dbReference type="BindingDB" id="O60240"/>
<dbReference type="ChEMBL" id="CHEMBL1741164"/>
<dbReference type="GlyCosmos" id="O60240">
    <property type="glycosylation" value="1 site, 1 glycan"/>
</dbReference>
<dbReference type="GlyGen" id="O60240">
    <property type="glycosylation" value="1 site, 1 O-linked glycan (1 site)"/>
</dbReference>
<dbReference type="iPTMnet" id="O60240"/>
<dbReference type="PhosphoSitePlus" id="O60240"/>
<dbReference type="BioMuta" id="PLIN1"/>
<dbReference type="jPOST" id="O60240"/>
<dbReference type="MassIVE" id="O60240"/>
<dbReference type="PaxDb" id="9606-ENSP00000300055"/>
<dbReference type="PeptideAtlas" id="O60240"/>
<dbReference type="ProteomicsDB" id="49270"/>
<dbReference type="Antibodypedia" id="15811">
    <property type="antibodies" value="384 antibodies from 37 providers"/>
</dbReference>
<dbReference type="DNASU" id="5346"/>
<dbReference type="Ensembl" id="ENST00000300055.10">
    <property type="protein sequence ID" value="ENSP00000300055.5"/>
    <property type="gene ID" value="ENSG00000166819.12"/>
</dbReference>
<dbReference type="Ensembl" id="ENST00000430628.2">
    <property type="protein sequence ID" value="ENSP00000402167.2"/>
    <property type="gene ID" value="ENSG00000166819.12"/>
</dbReference>
<dbReference type="GeneID" id="5346"/>
<dbReference type="KEGG" id="hsa:5346"/>
<dbReference type="MANE-Select" id="ENST00000300055.10">
    <property type="protein sequence ID" value="ENSP00000300055.5"/>
    <property type="RefSeq nucleotide sequence ID" value="NM_002666.5"/>
    <property type="RefSeq protein sequence ID" value="NP_002657.3"/>
</dbReference>
<dbReference type="UCSC" id="uc002boh.4">
    <property type="organism name" value="human"/>
</dbReference>
<dbReference type="AGR" id="HGNC:9076"/>
<dbReference type="CTD" id="5346"/>
<dbReference type="DisGeNET" id="5346"/>
<dbReference type="GeneCards" id="PLIN1"/>
<dbReference type="HGNC" id="HGNC:9076">
    <property type="gene designation" value="PLIN1"/>
</dbReference>
<dbReference type="HPA" id="ENSG00000166819">
    <property type="expression patterns" value="Group enriched (adipose tissue, breast)"/>
</dbReference>
<dbReference type="MalaCards" id="PLIN1"/>
<dbReference type="MIM" id="170290">
    <property type="type" value="gene"/>
</dbReference>
<dbReference type="MIM" id="613877">
    <property type="type" value="phenotype"/>
</dbReference>
<dbReference type="neXtProt" id="NX_O60240"/>
<dbReference type="OpenTargets" id="ENSG00000166819"/>
<dbReference type="Orphanet" id="280356">
    <property type="disease" value="PLIN1-related familial partial lipodystrophy"/>
</dbReference>
<dbReference type="PharmGKB" id="PA33409"/>
<dbReference type="VEuPathDB" id="HostDB:ENSG00000166819"/>
<dbReference type="eggNOG" id="ENOG502RY3Q">
    <property type="taxonomic scope" value="Eukaryota"/>
</dbReference>
<dbReference type="GeneTree" id="ENSGT00950000182920"/>
<dbReference type="HOGENOM" id="CLU_037212_1_0_1"/>
<dbReference type="InParanoid" id="O60240"/>
<dbReference type="OMA" id="LAMWSVE"/>
<dbReference type="OrthoDB" id="376826at2759"/>
<dbReference type="PAN-GO" id="O60240">
    <property type="GO annotations" value="0 GO annotations based on evolutionary models"/>
</dbReference>
<dbReference type="PhylomeDB" id="O60240"/>
<dbReference type="TreeFam" id="TF325901"/>
<dbReference type="PathwayCommons" id="O60240"/>
<dbReference type="Reactome" id="R-HSA-163560">
    <property type="pathway name" value="Triglyceride catabolism"/>
</dbReference>
<dbReference type="Reactome" id="R-HSA-381340">
    <property type="pathway name" value="Transcriptional regulation of white adipocyte differentiation"/>
</dbReference>
<dbReference type="Reactome" id="R-HSA-9031528">
    <property type="pathway name" value="NR1H2 &amp; NR1H3 regulate gene expression linked to triglyceride lipolysis in adipose"/>
</dbReference>
<dbReference type="Reactome" id="R-HSA-9841922">
    <property type="pathway name" value="MLL4 and MLL3 complexes regulate expression of PPARG target genes in adipogenesis and hepatic steatosis"/>
</dbReference>
<dbReference type="SignaLink" id="O60240"/>
<dbReference type="SIGNOR" id="O60240"/>
<dbReference type="BioGRID-ORCS" id="5346">
    <property type="hits" value="14 hits in 1146 CRISPR screens"/>
</dbReference>
<dbReference type="ChiTaRS" id="PLIN1">
    <property type="organism name" value="human"/>
</dbReference>
<dbReference type="GeneWiki" id="Perilipin"/>
<dbReference type="GenomeRNAi" id="5346"/>
<dbReference type="Pharos" id="O60240">
    <property type="development level" value="Tbio"/>
</dbReference>
<dbReference type="PRO" id="PR:O60240"/>
<dbReference type="Proteomes" id="UP000005640">
    <property type="component" value="Chromosome 15"/>
</dbReference>
<dbReference type="RNAct" id="O60240">
    <property type="molecule type" value="protein"/>
</dbReference>
<dbReference type="Bgee" id="ENSG00000166819">
    <property type="expression patterns" value="Expressed in subcutaneous adipose tissue and 116 other cell types or tissues"/>
</dbReference>
<dbReference type="ExpressionAtlas" id="O60240">
    <property type="expression patterns" value="baseline and differential"/>
</dbReference>
<dbReference type="GO" id="GO:0005829">
    <property type="term" value="C:cytosol"/>
    <property type="evidence" value="ECO:0007669"/>
    <property type="project" value="Ensembl"/>
</dbReference>
<dbReference type="GO" id="GO:0005783">
    <property type="term" value="C:endoplasmic reticulum"/>
    <property type="evidence" value="ECO:0007669"/>
    <property type="project" value="UniProtKB-SubCell"/>
</dbReference>
<dbReference type="GO" id="GO:0005811">
    <property type="term" value="C:lipid droplet"/>
    <property type="evidence" value="ECO:0000304"/>
    <property type="project" value="Reactome"/>
</dbReference>
<dbReference type="GO" id="GO:0008289">
    <property type="term" value="F:lipid binding"/>
    <property type="evidence" value="ECO:0000303"/>
    <property type="project" value="UniProtKB"/>
</dbReference>
<dbReference type="GO" id="GO:0070417">
    <property type="term" value="P:cellular response to cold"/>
    <property type="evidence" value="ECO:0007669"/>
    <property type="project" value="Ensembl"/>
</dbReference>
<dbReference type="GO" id="GO:0016042">
    <property type="term" value="P:lipid catabolic process"/>
    <property type="evidence" value="ECO:0007669"/>
    <property type="project" value="Ensembl"/>
</dbReference>
<dbReference type="GO" id="GO:0006629">
    <property type="term" value="P:lipid metabolic process"/>
    <property type="evidence" value="ECO:0000303"/>
    <property type="project" value="UniProtKB"/>
</dbReference>
<dbReference type="InterPro" id="IPR004279">
    <property type="entry name" value="Perilipin"/>
</dbReference>
<dbReference type="InterPro" id="IPR042998">
    <property type="entry name" value="PLIN1"/>
</dbReference>
<dbReference type="PANTHER" id="PTHR47138">
    <property type="entry name" value="PERILIPIN-1"/>
    <property type="match status" value="1"/>
</dbReference>
<dbReference type="PANTHER" id="PTHR47138:SF1">
    <property type="entry name" value="PERILIPIN-1"/>
    <property type="match status" value="1"/>
</dbReference>
<dbReference type="Pfam" id="PF03036">
    <property type="entry name" value="Perilipin"/>
    <property type="match status" value="1"/>
</dbReference>
<dbReference type="PIRSF" id="PIRSF036881">
    <property type="entry name" value="PAT"/>
    <property type="match status" value="1"/>
</dbReference>
<reference key="1">
    <citation type="journal article" date="1998" name="Genomics">
        <title>Isolation and chromosomal mapping of the human homolog of perilipin (PLIN), a rat adipose tissue-specific gene, by differential display method.</title>
        <authorList>
            <person name="Nishiu J."/>
            <person name="Tanaka T."/>
            <person name="Nakamura Y."/>
        </authorList>
    </citation>
    <scope>NUCLEOTIDE SEQUENCE [MRNA]</scope>
    <scope>TISSUE SPECIFICITY</scope>
    <scope>VARIANT ALA-194</scope>
    <source>
        <tissue>Adipocyte</tissue>
    </source>
</reference>
<reference key="2">
    <citation type="journal article" date="2006" name="Nature">
        <title>Analysis of the DNA sequence and duplication history of human chromosome 15.</title>
        <authorList>
            <person name="Zody M.C."/>
            <person name="Garber M."/>
            <person name="Sharpe T."/>
            <person name="Young S.K."/>
            <person name="Rowen L."/>
            <person name="O'Neill K."/>
            <person name="Whittaker C.A."/>
            <person name="Kamal M."/>
            <person name="Chang J.L."/>
            <person name="Cuomo C.A."/>
            <person name="Dewar K."/>
            <person name="FitzGerald M.G."/>
            <person name="Kodira C.D."/>
            <person name="Madan A."/>
            <person name="Qin S."/>
            <person name="Yang X."/>
            <person name="Abbasi N."/>
            <person name="Abouelleil A."/>
            <person name="Arachchi H.M."/>
            <person name="Baradarani L."/>
            <person name="Birditt B."/>
            <person name="Bloom S."/>
            <person name="Bloom T."/>
            <person name="Borowsky M.L."/>
            <person name="Burke J."/>
            <person name="Butler J."/>
            <person name="Cook A."/>
            <person name="DeArellano K."/>
            <person name="DeCaprio D."/>
            <person name="Dorris L. III"/>
            <person name="Dors M."/>
            <person name="Eichler E.E."/>
            <person name="Engels R."/>
            <person name="Fahey J."/>
            <person name="Fleetwood P."/>
            <person name="Friedman C."/>
            <person name="Gearin G."/>
            <person name="Hall J.L."/>
            <person name="Hensley G."/>
            <person name="Johnson E."/>
            <person name="Jones C."/>
            <person name="Kamat A."/>
            <person name="Kaur A."/>
            <person name="Locke D.P."/>
            <person name="Madan A."/>
            <person name="Munson G."/>
            <person name="Jaffe D.B."/>
            <person name="Lui A."/>
            <person name="Macdonald P."/>
            <person name="Mauceli E."/>
            <person name="Naylor J.W."/>
            <person name="Nesbitt R."/>
            <person name="Nicol R."/>
            <person name="O'Leary S.B."/>
            <person name="Ratcliffe A."/>
            <person name="Rounsley S."/>
            <person name="She X."/>
            <person name="Sneddon K.M.B."/>
            <person name="Stewart S."/>
            <person name="Sougnez C."/>
            <person name="Stone S.M."/>
            <person name="Topham K."/>
            <person name="Vincent D."/>
            <person name="Wang S."/>
            <person name="Zimmer A.R."/>
            <person name="Birren B.W."/>
            <person name="Hood L."/>
            <person name="Lander E.S."/>
            <person name="Nusbaum C."/>
        </authorList>
    </citation>
    <scope>NUCLEOTIDE SEQUENCE [LARGE SCALE GENOMIC DNA]</scope>
</reference>
<reference key="3">
    <citation type="journal article" date="2004" name="Genome Res.">
        <title>The status, quality, and expansion of the NIH full-length cDNA project: the Mammalian Gene Collection (MGC).</title>
        <authorList>
            <consortium name="The MGC Project Team"/>
        </authorList>
    </citation>
    <scope>NUCLEOTIDE SEQUENCE [LARGE SCALE MRNA]</scope>
    <scope>VARIANTS ALA-194 AND GLU-210</scope>
    <source>
        <tissue>Brain</tissue>
    </source>
</reference>
<reference key="4">
    <citation type="journal article" date="2011" name="N. Engl. J. Med.">
        <title>Perilipin deficiency and autosomal dominant partial lipodystrophy.</title>
        <authorList>
            <person name="Gandotra S."/>
            <person name="Le Dour C."/>
            <person name="Bottomley W."/>
            <person name="Cervera P."/>
            <person name="Giral P."/>
            <person name="Reznik Y."/>
            <person name="Charpentier G."/>
            <person name="Auclair M."/>
            <person name="Delepine M."/>
            <person name="Barroso I."/>
            <person name="Semple R.K."/>
            <person name="Lathrop M."/>
            <person name="Lascols O."/>
            <person name="Capeau J."/>
            <person name="O'Rahilly S."/>
            <person name="Magre J."/>
            <person name="Savage D.B."/>
            <person name="Vigouroux C."/>
        </authorList>
    </citation>
    <scope>INVOLVEMENT IN FPLD4</scope>
</reference>
<reference key="5">
    <citation type="journal article" date="2013" name="Biochem. Biophys. Res. Commun.">
        <title>FSP27 and PLIN1 interaction promotes the formation of large lipid droplets in human adipocytes.</title>
        <authorList>
            <person name="Grahn T.H."/>
            <person name="Zhang Y."/>
            <person name="Lee M.J."/>
            <person name="Sommer A.G."/>
            <person name="Mostoslavsky G."/>
            <person name="Fried S.K."/>
            <person name="Greenberg A.S."/>
            <person name="Puri V."/>
        </authorList>
    </citation>
    <scope>FUNCTION IN UNILOCULAR LIPID DROPLET FORMATION AND LIPOLYSIS</scope>
    <scope>INTERACTION WITH CIDEC</scope>
    <scope>SUBCELLULAR LOCATION</scope>
</reference>
<reference key="6">
    <citation type="journal article" date="2014" name="J. Proteomics">
        <title>An enzyme assisted RP-RPLC approach for in-depth analysis of human liver phosphoproteome.</title>
        <authorList>
            <person name="Bian Y."/>
            <person name="Song C."/>
            <person name="Cheng K."/>
            <person name="Dong M."/>
            <person name="Wang F."/>
            <person name="Huang J."/>
            <person name="Sun D."/>
            <person name="Wang L."/>
            <person name="Ye M."/>
            <person name="Zou H."/>
        </authorList>
    </citation>
    <scope>PHOSPHORYLATION [LARGE SCALE ANALYSIS] AT SER-81; SER-130; SER-174; SER-382; SER-436 AND SER-497</scope>
    <scope>IDENTIFICATION BY MASS SPECTROMETRY [LARGE SCALE ANALYSIS]</scope>
    <source>
        <tissue>Liver</tissue>
    </source>
</reference>
<reference key="7">
    <citation type="journal article" date="2015" name="PeerJ">
        <title>Perilipin-related protein regulates lipid metabolism in C. elegans.</title>
        <authorList>
            <person name="Chughtai A.A."/>
            <person name="Kassak F."/>
            <person name="Kostrouchova M."/>
            <person name="Novotny J.P."/>
            <person name="Krause M.W."/>
            <person name="Saudek V."/>
            <person name="Kostrouch Z."/>
            <person name="Kostrouchova M."/>
        </authorList>
    </citation>
    <scope>SUBCELLULAR LOCATION</scope>
</reference>
<reference key="8">
    <citation type="journal article" date="2016" name="Metabolism">
        <title>Perilipin 1 binds to aquaporin 7 in human adipocytes and controls its mobility via protein kinase A mediated phosphorylation.</title>
        <authorList>
            <person name="Hansen J.S."/>
            <person name="Krintel C."/>
            <person name="Hernebring M."/>
            <person name="Haataja T.J."/>
            <person name="de Mare S."/>
            <person name="Wasserstrom S."/>
            <person name="Kosinska-Eriksson U."/>
            <person name="Palmgren M."/>
            <person name="Holm C."/>
            <person name="Stenkula K.G."/>
            <person name="Jones H.A."/>
            <person name="Lindkvist-Petersson K."/>
        </authorList>
    </citation>
    <scope>INTERACTION WITH AQP7</scope>
    <scope>IDENTIFICATION BY MASS SPECTROMETRY</scope>
    <scope>TISSUE SPECIFICITY</scope>
</reference>
<keyword id="KW-0256">Endoplasmic reticulum</keyword>
<keyword id="KW-0551">Lipid droplet</keyword>
<keyword id="KW-0443">Lipid metabolism</keyword>
<keyword id="KW-0597">Phosphoprotein</keyword>
<keyword id="KW-1267">Proteomics identification</keyword>
<keyword id="KW-1185">Reference proteome</keyword>
<gene>
    <name type="primary">PLIN1</name>
    <name type="synonym">PERI</name>
    <name type="synonym">PLIN</name>
</gene>
<accession>O60240</accession>
<accession>Q8N5Y6</accession>
<feature type="chain" id="PRO_0000099884" description="Perilipin-1">
    <location>
        <begin position="1"/>
        <end position="522"/>
    </location>
</feature>
<feature type="region of interest" description="Disordered" evidence="4">
    <location>
        <begin position="195"/>
        <end position="217"/>
    </location>
</feature>
<feature type="region of interest" description="Disordered" evidence="4">
    <location>
        <begin position="287"/>
        <end position="318"/>
    </location>
</feature>
<feature type="region of interest" description="Required for interaction with CIDEC" evidence="1">
    <location>
        <begin position="291"/>
        <end position="319"/>
    </location>
</feature>
<feature type="region of interest" description="Disordered" evidence="4">
    <location>
        <begin position="413"/>
        <end position="522"/>
    </location>
</feature>
<feature type="compositionally biased region" description="Acidic residues" evidence="4">
    <location>
        <begin position="291"/>
        <end position="314"/>
    </location>
</feature>
<feature type="compositionally biased region" description="Basic and acidic residues" evidence="4">
    <location>
        <begin position="414"/>
        <end position="435"/>
    </location>
</feature>
<feature type="modified residue" description="Phosphoserine" evidence="12">
    <location>
        <position position="81"/>
    </location>
</feature>
<feature type="modified residue" description="Phosphothreonine" evidence="3">
    <location>
        <position position="85"/>
    </location>
</feature>
<feature type="modified residue" description="Phosphoserine" evidence="3">
    <location>
        <position position="126"/>
    </location>
</feature>
<feature type="modified residue" description="Phosphoserine" evidence="12">
    <location>
        <position position="130"/>
    </location>
</feature>
<feature type="modified residue" description="Phosphoserine" evidence="3">
    <location>
        <position position="132"/>
    </location>
</feature>
<feature type="modified residue" description="Phosphoserine" evidence="3">
    <location>
        <position position="137"/>
    </location>
</feature>
<feature type="modified residue" description="Phosphoserine" evidence="12">
    <location>
        <position position="174"/>
    </location>
</feature>
<feature type="modified residue" description="Phosphothreonine" evidence="2">
    <location>
        <position position="299"/>
    </location>
</feature>
<feature type="modified residue" description="Phosphothreonine" evidence="2">
    <location>
        <position position="301"/>
    </location>
</feature>
<feature type="modified residue" description="Phosphoserine" evidence="12">
    <location>
        <position position="382"/>
    </location>
</feature>
<feature type="modified residue" description="Phosphoserine" evidence="2">
    <location>
        <position position="384"/>
    </location>
</feature>
<feature type="modified residue" description="Phosphoserine" evidence="3">
    <location>
        <position position="408"/>
    </location>
</feature>
<feature type="modified residue" description="Phosphoserine" evidence="12">
    <location>
        <position position="436"/>
    </location>
</feature>
<feature type="modified residue" description="Phosphoserine" evidence="12">
    <location>
        <position position="497"/>
    </location>
</feature>
<feature type="modified residue" description="Phosphoserine" evidence="3">
    <location>
        <position position="499"/>
    </location>
</feature>
<feature type="sequence variant" id="VAR_055046" description="In dbSNP:rs6496589." evidence="5 9">
    <original>P</original>
    <variation>A</variation>
    <location>
        <position position="194"/>
    </location>
</feature>
<feature type="sequence variant" id="VAR_055047" description="In dbSNP:rs17852910." evidence="5">
    <original>K</original>
    <variation>E</variation>
    <location>
        <position position="210"/>
    </location>
</feature>
<feature type="sequence variant" id="VAR_061505" description="In dbSNP:rs58361219.">
    <original>A</original>
    <variation>V</variation>
    <location>
        <position position="271"/>
    </location>
</feature>
<feature type="sequence variant" id="VAR_055048" description="In dbSNP:rs8179071.">
    <original>S</original>
    <variation>L</variation>
    <location>
        <position position="348"/>
    </location>
</feature>
<feature type="sequence conflict" description="In Ref. 1; BAA25420." evidence="10" ref="1">
    <original>L</original>
    <variation>V</variation>
    <location>
        <position position="510"/>
    </location>
</feature>
<sequence>MAVNKGLTLLDGDLPEQENVLQRVLQLPVVSGTCECFQKTYTSTKEAHPLVASVCNAYEKGVQSASSLAAWSMEPVVRRLSTQFTAANELACRGLDHLEEKIPALQYPPEKIASELKDTISTRLRSARNSISVPIASTSDKVLGAALAGCELAWGVARDTAEFAANTRAGRLASGGADLALGSIEKVVEYLLPPDKEESAPAPGHQQAQKSPKAKPSLLSRVGALTNTLSRYTVQTMARALEQGHTVAMWIPGVVPLSSLAQWGASVAMQAVSRRRSEVRVPWLHSLAAAQEEDHEDQTDTEGEDTEEEEELETEENKFSEVAALPGPRGLLGGVAHTLQKTLQTTISAVTWAPAAVLGMAGRVLHLTPAPAVSSTKGRAMSLSDALKGVTDNVVDTVVHYVPLPRLSLMEPESEFRDIDNPPAEVERREAERRASGAPSAGPEPAPRLAQPRRSLRSAQSPGAPPGPGLEDEVATPAAPRPGFPAVPREKPKRRVSDSFFRPSVMEPILGRTHYSQLRKKS</sequence>
<name>PLIN1_HUMAN</name>
<protein>
    <recommendedName>
        <fullName>Perilipin-1</fullName>
    </recommendedName>
    <alternativeName>
        <fullName>Lipid droplet-associated protein</fullName>
    </alternativeName>
</protein>
<organism>
    <name type="scientific">Homo sapiens</name>
    <name type="common">Human</name>
    <dbReference type="NCBI Taxonomy" id="9606"/>
    <lineage>
        <taxon>Eukaryota</taxon>
        <taxon>Metazoa</taxon>
        <taxon>Chordata</taxon>
        <taxon>Craniata</taxon>
        <taxon>Vertebrata</taxon>
        <taxon>Euteleostomi</taxon>
        <taxon>Mammalia</taxon>
        <taxon>Eutheria</taxon>
        <taxon>Euarchontoglires</taxon>
        <taxon>Primates</taxon>
        <taxon>Haplorrhini</taxon>
        <taxon>Catarrhini</taxon>
        <taxon>Hominidae</taxon>
        <taxon>Homo</taxon>
    </lineage>
</organism>